<comment type="function">
    <text evidence="1">With S4 and S12 plays an important role in translational accuracy.</text>
</comment>
<comment type="function">
    <text evidence="1">Located at the back of the 30S subunit body where it stabilizes the conformation of the head with respect to the body.</text>
</comment>
<comment type="subunit">
    <text evidence="1">Part of the 30S ribosomal subunit. Contacts proteins S4 and S8.</text>
</comment>
<comment type="domain">
    <text>The N-terminal domain interacts with the head of the 30S subunit; the C-terminal domain interacts with the body and contacts protein S4. The interaction surface between S4 and S5 is involved in control of translational fidelity.</text>
</comment>
<comment type="similarity">
    <text evidence="1">Belongs to the universal ribosomal protein uS5 family.</text>
</comment>
<proteinExistence type="inferred from homology"/>
<feature type="chain" id="PRO_0000230375" description="Small ribosomal subunit protein uS5">
    <location>
        <begin position="1"/>
        <end position="164"/>
    </location>
</feature>
<feature type="domain" description="S5 DRBM" evidence="1">
    <location>
        <begin position="10"/>
        <end position="73"/>
    </location>
</feature>
<accession>Q48VT2</accession>
<protein>
    <recommendedName>
        <fullName evidence="1">Small ribosomal subunit protein uS5</fullName>
    </recommendedName>
    <alternativeName>
        <fullName evidence="2">30S ribosomal protein S5</fullName>
    </alternativeName>
</protein>
<keyword id="KW-0687">Ribonucleoprotein</keyword>
<keyword id="KW-0689">Ribosomal protein</keyword>
<keyword id="KW-0694">RNA-binding</keyword>
<keyword id="KW-0699">rRNA-binding</keyword>
<sequence length="164" mass="17028">MAFKDNAVELEERVVAINRVTKVVKGGRRLRFAALVVVGDGNGRVGFGTGKAQEVPEAIRKAVEAAKKNMIEVPMVGTTIPHEVYTNFGGAKVLLKPAVEGSGVAAGGAVRAVIELAGVADITSKSLGSNTPINIVRATVEGLKQLKRAEEVAALRGISVSDLA</sequence>
<organism>
    <name type="scientific">Streptococcus pyogenes serotype M28 (strain MGAS6180)</name>
    <dbReference type="NCBI Taxonomy" id="319701"/>
    <lineage>
        <taxon>Bacteria</taxon>
        <taxon>Bacillati</taxon>
        <taxon>Bacillota</taxon>
        <taxon>Bacilli</taxon>
        <taxon>Lactobacillales</taxon>
        <taxon>Streptococcaceae</taxon>
        <taxon>Streptococcus</taxon>
    </lineage>
</organism>
<gene>
    <name evidence="1" type="primary">rpsE</name>
    <name type="ordered locus">M28_Spy0060</name>
</gene>
<name>RS5_STRPM</name>
<reference key="1">
    <citation type="journal article" date="2005" name="J. Infect. Dis.">
        <title>Genome sequence of a serotype M28 strain of group A Streptococcus: potential new insights into puerperal sepsis and bacterial disease specificity.</title>
        <authorList>
            <person name="Green N.M."/>
            <person name="Zhang S."/>
            <person name="Porcella S.F."/>
            <person name="Nagiec M.J."/>
            <person name="Barbian K.D."/>
            <person name="Beres S.B."/>
            <person name="Lefebvre R.B."/>
            <person name="Musser J.M."/>
        </authorList>
    </citation>
    <scope>NUCLEOTIDE SEQUENCE [LARGE SCALE GENOMIC DNA]</scope>
    <source>
        <strain>MGAS6180</strain>
    </source>
</reference>
<evidence type="ECO:0000255" key="1">
    <source>
        <dbReference type="HAMAP-Rule" id="MF_01307"/>
    </source>
</evidence>
<evidence type="ECO:0000305" key="2"/>
<dbReference type="EMBL" id="CP000056">
    <property type="protein sequence ID" value="AAX71174.1"/>
    <property type="molecule type" value="Genomic_DNA"/>
</dbReference>
<dbReference type="RefSeq" id="WP_002986625.1">
    <property type="nucleotide sequence ID" value="NC_007296.2"/>
</dbReference>
<dbReference type="SMR" id="Q48VT2"/>
<dbReference type="GeneID" id="69900043"/>
<dbReference type="KEGG" id="spb:M28_Spy0060"/>
<dbReference type="HOGENOM" id="CLU_065898_2_2_9"/>
<dbReference type="GO" id="GO:0015935">
    <property type="term" value="C:small ribosomal subunit"/>
    <property type="evidence" value="ECO:0007669"/>
    <property type="project" value="InterPro"/>
</dbReference>
<dbReference type="GO" id="GO:0019843">
    <property type="term" value="F:rRNA binding"/>
    <property type="evidence" value="ECO:0007669"/>
    <property type="project" value="UniProtKB-UniRule"/>
</dbReference>
<dbReference type="GO" id="GO:0003735">
    <property type="term" value="F:structural constituent of ribosome"/>
    <property type="evidence" value="ECO:0007669"/>
    <property type="project" value="InterPro"/>
</dbReference>
<dbReference type="GO" id="GO:0006412">
    <property type="term" value="P:translation"/>
    <property type="evidence" value="ECO:0007669"/>
    <property type="project" value="UniProtKB-UniRule"/>
</dbReference>
<dbReference type="FunFam" id="3.30.160.20:FF:000001">
    <property type="entry name" value="30S ribosomal protein S5"/>
    <property type="match status" value="1"/>
</dbReference>
<dbReference type="FunFam" id="3.30.230.10:FF:000002">
    <property type="entry name" value="30S ribosomal protein S5"/>
    <property type="match status" value="1"/>
</dbReference>
<dbReference type="Gene3D" id="3.30.160.20">
    <property type="match status" value="1"/>
</dbReference>
<dbReference type="Gene3D" id="3.30.230.10">
    <property type="match status" value="1"/>
</dbReference>
<dbReference type="HAMAP" id="MF_01307_B">
    <property type="entry name" value="Ribosomal_uS5_B"/>
    <property type="match status" value="1"/>
</dbReference>
<dbReference type="InterPro" id="IPR020568">
    <property type="entry name" value="Ribosomal_Su5_D2-typ_SF"/>
</dbReference>
<dbReference type="InterPro" id="IPR000851">
    <property type="entry name" value="Ribosomal_uS5"/>
</dbReference>
<dbReference type="InterPro" id="IPR005712">
    <property type="entry name" value="Ribosomal_uS5_bac-type"/>
</dbReference>
<dbReference type="InterPro" id="IPR005324">
    <property type="entry name" value="Ribosomal_uS5_C"/>
</dbReference>
<dbReference type="InterPro" id="IPR013810">
    <property type="entry name" value="Ribosomal_uS5_N"/>
</dbReference>
<dbReference type="InterPro" id="IPR018192">
    <property type="entry name" value="Ribosomal_uS5_N_CS"/>
</dbReference>
<dbReference type="InterPro" id="IPR014721">
    <property type="entry name" value="Ribsml_uS5_D2-typ_fold_subgr"/>
</dbReference>
<dbReference type="NCBIfam" id="TIGR01021">
    <property type="entry name" value="rpsE_bact"/>
    <property type="match status" value="1"/>
</dbReference>
<dbReference type="PANTHER" id="PTHR48277">
    <property type="entry name" value="MITOCHONDRIAL RIBOSOMAL PROTEIN S5"/>
    <property type="match status" value="1"/>
</dbReference>
<dbReference type="PANTHER" id="PTHR48277:SF1">
    <property type="entry name" value="MITOCHONDRIAL RIBOSOMAL PROTEIN S5"/>
    <property type="match status" value="1"/>
</dbReference>
<dbReference type="Pfam" id="PF00333">
    <property type="entry name" value="Ribosomal_S5"/>
    <property type="match status" value="1"/>
</dbReference>
<dbReference type="Pfam" id="PF03719">
    <property type="entry name" value="Ribosomal_S5_C"/>
    <property type="match status" value="1"/>
</dbReference>
<dbReference type="SUPFAM" id="SSF54768">
    <property type="entry name" value="dsRNA-binding domain-like"/>
    <property type="match status" value="1"/>
</dbReference>
<dbReference type="SUPFAM" id="SSF54211">
    <property type="entry name" value="Ribosomal protein S5 domain 2-like"/>
    <property type="match status" value="1"/>
</dbReference>
<dbReference type="PROSITE" id="PS00585">
    <property type="entry name" value="RIBOSOMAL_S5"/>
    <property type="match status" value="1"/>
</dbReference>
<dbReference type="PROSITE" id="PS50881">
    <property type="entry name" value="S5_DSRBD"/>
    <property type="match status" value="1"/>
</dbReference>